<proteinExistence type="evidence at transcript level"/>
<sequence>MGHRTRMILVLTLVVMSIWGSDASAMQKTKFDAPLLTEKIATNRSIIVDIEGKGDYTSVQKAIDAVPVGNSNWIIVHVRKGIYKERVHIPENKPFIFMRGNGKGKTVIESSQSSVDNVASATFKVEANHFVAFGISIRNDAPVGMAFTSENQSVAAFVAADKVAFYHCAFYSLHNTLFDNKGRHYYHECYIQGSIDFIFGRATSIFNNCEIFVISDKRVKPYGSITAHHRESAEEKTGYVFIRGKVYGIDEVYLGRAKGPYSRVIFAKTYLSKTVVPDGWTNWSYHGSTQNLYHGEYKCHGPGAERQKRSDWAKDLTKQEVESFLSIDFIDGTSWLPVWLQEKF</sequence>
<name>PME67_ARATH</name>
<organism>
    <name type="scientific">Arabidopsis thaliana</name>
    <name type="common">Mouse-ear cress</name>
    <dbReference type="NCBI Taxonomy" id="3702"/>
    <lineage>
        <taxon>Eukaryota</taxon>
        <taxon>Viridiplantae</taxon>
        <taxon>Streptophyta</taxon>
        <taxon>Embryophyta</taxon>
        <taxon>Tracheophyta</taxon>
        <taxon>Spermatophyta</taxon>
        <taxon>Magnoliopsida</taxon>
        <taxon>eudicotyledons</taxon>
        <taxon>Gunneridae</taxon>
        <taxon>Pentapetalae</taxon>
        <taxon>rosids</taxon>
        <taxon>malvids</taxon>
        <taxon>Brassicales</taxon>
        <taxon>Brassicaceae</taxon>
        <taxon>Camelineae</taxon>
        <taxon>Arabidopsis</taxon>
    </lineage>
</organism>
<accession>Q9LSP1</accession>
<feature type="signal peptide" evidence="2">
    <location>
        <begin position="1"/>
        <end position="23"/>
    </location>
</feature>
<feature type="chain" id="PRO_0000371711" description="Probable pectinesterase 67">
    <location>
        <begin position="24"/>
        <end position="344"/>
    </location>
</feature>
<feature type="active site" description="Nucleophile" evidence="3">
    <location>
        <position position="196"/>
    </location>
</feature>
<feature type="binding site" evidence="1">
    <location>
        <position position="152"/>
    </location>
    <ligand>
        <name>substrate</name>
    </ligand>
</feature>
<feature type="binding site" evidence="1">
    <location>
        <position position="256"/>
    </location>
    <ligand>
        <name>substrate</name>
    </ligand>
</feature>
<feature type="glycosylation site" description="N-linked (GlcNAc...) asparagine" evidence="2">
    <location>
        <position position="43"/>
    </location>
</feature>
<feature type="glycosylation site" description="N-linked (GlcNAc...) asparagine" evidence="2">
    <location>
        <position position="151"/>
    </location>
</feature>
<feature type="glycosylation site" description="N-linked (GlcNAc...) asparagine" evidence="2">
    <location>
        <position position="282"/>
    </location>
</feature>
<evidence type="ECO:0000250" key="1"/>
<evidence type="ECO:0000255" key="2"/>
<evidence type="ECO:0000255" key="3">
    <source>
        <dbReference type="PROSITE-ProRule" id="PRU10040"/>
    </source>
</evidence>
<evidence type="ECO:0000269" key="4">
    <source>
    </source>
</evidence>
<evidence type="ECO:0000305" key="5"/>
<keyword id="KW-0063">Aspartyl esterase</keyword>
<keyword id="KW-0134">Cell wall</keyword>
<keyword id="KW-0961">Cell wall biogenesis/degradation</keyword>
<keyword id="KW-0325">Glycoprotein</keyword>
<keyword id="KW-0378">Hydrolase</keyword>
<keyword id="KW-1185">Reference proteome</keyword>
<keyword id="KW-0964">Secreted</keyword>
<keyword id="KW-0732">Signal</keyword>
<dbReference type="EC" id="3.1.1.11"/>
<dbReference type="EMBL" id="AB026636">
    <property type="protein sequence ID" value="BAA94984.1"/>
    <property type="molecule type" value="Genomic_DNA"/>
</dbReference>
<dbReference type="EMBL" id="CP002686">
    <property type="protein sequence ID" value="AEE75899.1"/>
    <property type="molecule type" value="Genomic_DNA"/>
</dbReference>
<dbReference type="EMBL" id="AK118362">
    <property type="protein sequence ID" value="BAC42976.1"/>
    <property type="molecule type" value="mRNA"/>
</dbReference>
<dbReference type="EMBL" id="BT005685">
    <property type="protein sequence ID" value="AAO64105.1"/>
    <property type="molecule type" value="mRNA"/>
</dbReference>
<dbReference type="EMBL" id="AY085221">
    <property type="protein sequence ID" value="AAM62454.1"/>
    <property type="molecule type" value="mRNA"/>
</dbReference>
<dbReference type="RefSeq" id="NP_188331.1">
    <property type="nucleotide sequence ID" value="NM_112582.2"/>
</dbReference>
<dbReference type="SMR" id="Q9LSP1"/>
<dbReference type="FunCoup" id="Q9LSP1">
    <property type="interactions" value="126"/>
</dbReference>
<dbReference type="STRING" id="3702.Q9LSP1"/>
<dbReference type="GlyCosmos" id="Q9LSP1">
    <property type="glycosylation" value="3 sites, No reported glycans"/>
</dbReference>
<dbReference type="GlyGen" id="Q9LSP1">
    <property type="glycosylation" value="3 sites"/>
</dbReference>
<dbReference type="PaxDb" id="3702-AT3G17060.1"/>
<dbReference type="ProteomicsDB" id="234978"/>
<dbReference type="EnsemblPlants" id="AT3G17060.1">
    <property type="protein sequence ID" value="AT3G17060.1"/>
    <property type="gene ID" value="AT3G17060"/>
</dbReference>
<dbReference type="GeneID" id="820963"/>
<dbReference type="Gramene" id="AT3G17060.1">
    <property type="protein sequence ID" value="AT3G17060.1"/>
    <property type="gene ID" value="AT3G17060"/>
</dbReference>
<dbReference type="KEGG" id="ath:AT3G17060"/>
<dbReference type="Araport" id="AT3G17060"/>
<dbReference type="TAIR" id="AT3G17060"/>
<dbReference type="eggNOG" id="ENOG502QU68">
    <property type="taxonomic scope" value="Eukaryota"/>
</dbReference>
<dbReference type="HOGENOM" id="CLU_012243_3_0_1"/>
<dbReference type="InParanoid" id="Q9LSP1"/>
<dbReference type="OMA" id="TWAQANH"/>
<dbReference type="OrthoDB" id="2019149at2759"/>
<dbReference type="PhylomeDB" id="Q9LSP1"/>
<dbReference type="BioCyc" id="ARA:AT3G17060-MONOMER"/>
<dbReference type="BRENDA" id="3.1.1.11">
    <property type="organism ID" value="399"/>
</dbReference>
<dbReference type="UniPathway" id="UPA00545">
    <property type="reaction ID" value="UER00823"/>
</dbReference>
<dbReference type="PRO" id="PR:Q9LSP1"/>
<dbReference type="Proteomes" id="UP000006548">
    <property type="component" value="Chromosome 3"/>
</dbReference>
<dbReference type="ExpressionAtlas" id="Q9LSP1">
    <property type="expression patterns" value="baseline and differential"/>
</dbReference>
<dbReference type="GO" id="GO:0005576">
    <property type="term" value="C:extracellular region"/>
    <property type="evidence" value="ECO:0007669"/>
    <property type="project" value="UniProtKB-KW"/>
</dbReference>
<dbReference type="GO" id="GO:0030599">
    <property type="term" value="F:pectinesterase activity"/>
    <property type="evidence" value="ECO:0007669"/>
    <property type="project" value="UniProtKB-EC"/>
</dbReference>
<dbReference type="GO" id="GO:0042545">
    <property type="term" value="P:cell wall modification"/>
    <property type="evidence" value="ECO:0007669"/>
    <property type="project" value="InterPro"/>
</dbReference>
<dbReference type="GO" id="GO:0045490">
    <property type="term" value="P:pectin catabolic process"/>
    <property type="evidence" value="ECO:0007669"/>
    <property type="project" value="UniProtKB-UniPathway"/>
</dbReference>
<dbReference type="FunFam" id="2.160.20.10:FF:000013">
    <property type="entry name" value="Pectinesterase"/>
    <property type="match status" value="1"/>
</dbReference>
<dbReference type="Gene3D" id="2.160.20.10">
    <property type="entry name" value="Single-stranded right-handed beta-helix, Pectin lyase-like"/>
    <property type="match status" value="1"/>
</dbReference>
<dbReference type="InterPro" id="IPR012334">
    <property type="entry name" value="Pectin_lyas_fold"/>
</dbReference>
<dbReference type="InterPro" id="IPR011050">
    <property type="entry name" value="Pectin_lyase_fold/virulence"/>
</dbReference>
<dbReference type="InterPro" id="IPR033131">
    <property type="entry name" value="Pectinesterase_Asp_AS"/>
</dbReference>
<dbReference type="InterPro" id="IPR000070">
    <property type="entry name" value="Pectinesterase_cat"/>
</dbReference>
<dbReference type="PANTHER" id="PTHR31321">
    <property type="entry name" value="ACYL-COA THIOESTER HYDROLASE YBHC-RELATED"/>
    <property type="match status" value="1"/>
</dbReference>
<dbReference type="PANTHER" id="PTHR31321:SF98">
    <property type="entry name" value="PECTINESTERASE 67-RELATED"/>
    <property type="match status" value="1"/>
</dbReference>
<dbReference type="Pfam" id="PF01095">
    <property type="entry name" value="Pectinesterase"/>
    <property type="match status" value="1"/>
</dbReference>
<dbReference type="SUPFAM" id="SSF51126">
    <property type="entry name" value="Pectin lyase-like"/>
    <property type="match status" value="1"/>
</dbReference>
<dbReference type="PROSITE" id="PS00503">
    <property type="entry name" value="PECTINESTERASE_2"/>
    <property type="match status" value="1"/>
</dbReference>
<reference key="1">
    <citation type="journal article" date="2000" name="DNA Res.">
        <title>Structural analysis of Arabidopsis thaliana chromosome 3. I. Sequence features of the regions of 4,504,864 bp covered by sixty P1 and TAC clones.</title>
        <authorList>
            <person name="Sato S."/>
            <person name="Nakamura Y."/>
            <person name="Kaneko T."/>
            <person name="Katoh T."/>
            <person name="Asamizu E."/>
            <person name="Tabata S."/>
        </authorList>
    </citation>
    <scope>NUCLEOTIDE SEQUENCE [LARGE SCALE GENOMIC DNA]</scope>
    <source>
        <strain>cv. Columbia</strain>
    </source>
</reference>
<reference key="2">
    <citation type="journal article" date="2017" name="Plant J.">
        <title>Araport11: a complete reannotation of the Arabidopsis thaliana reference genome.</title>
        <authorList>
            <person name="Cheng C.Y."/>
            <person name="Krishnakumar V."/>
            <person name="Chan A.P."/>
            <person name="Thibaud-Nissen F."/>
            <person name="Schobel S."/>
            <person name="Town C.D."/>
        </authorList>
    </citation>
    <scope>GENOME REANNOTATION</scope>
    <source>
        <strain>cv. Columbia</strain>
    </source>
</reference>
<reference key="3">
    <citation type="journal article" date="2002" name="Science">
        <title>Functional annotation of a full-length Arabidopsis cDNA collection.</title>
        <authorList>
            <person name="Seki M."/>
            <person name="Narusaka M."/>
            <person name="Kamiya A."/>
            <person name="Ishida J."/>
            <person name="Satou M."/>
            <person name="Sakurai T."/>
            <person name="Nakajima M."/>
            <person name="Enju A."/>
            <person name="Akiyama K."/>
            <person name="Oono Y."/>
            <person name="Muramatsu M."/>
            <person name="Hayashizaki Y."/>
            <person name="Kawai J."/>
            <person name="Carninci P."/>
            <person name="Itoh M."/>
            <person name="Ishii Y."/>
            <person name="Arakawa T."/>
            <person name="Shibata K."/>
            <person name="Shinagawa A."/>
            <person name="Shinozaki K."/>
        </authorList>
    </citation>
    <scope>NUCLEOTIDE SEQUENCE [LARGE SCALE MRNA]</scope>
    <source>
        <strain>cv. Columbia</strain>
    </source>
</reference>
<reference key="4">
    <citation type="journal article" date="2003" name="Science">
        <title>Empirical analysis of transcriptional activity in the Arabidopsis genome.</title>
        <authorList>
            <person name="Yamada K."/>
            <person name="Lim J."/>
            <person name="Dale J.M."/>
            <person name="Chen H."/>
            <person name="Shinn P."/>
            <person name="Palm C.J."/>
            <person name="Southwick A.M."/>
            <person name="Wu H.C."/>
            <person name="Kim C.J."/>
            <person name="Nguyen M."/>
            <person name="Pham P.K."/>
            <person name="Cheuk R.F."/>
            <person name="Karlin-Newmann G."/>
            <person name="Liu S.X."/>
            <person name="Lam B."/>
            <person name="Sakano H."/>
            <person name="Wu T."/>
            <person name="Yu G."/>
            <person name="Miranda M."/>
            <person name="Quach H.L."/>
            <person name="Tripp M."/>
            <person name="Chang C.H."/>
            <person name="Lee J.M."/>
            <person name="Toriumi M.J."/>
            <person name="Chan M.M."/>
            <person name="Tang C.C."/>
            <person name="Onodera C.S."/>
            <person name="Deng J.M."/>
            <person name="Akiyama K."/>
            <person name="Ansari Y."/>
            <person name="Arakawa T."/>
            <person name="Banh J."/>
            <person name="Banno F."/>
            <person name="Bowser L."/>
            <person name="Brooks S.Y."/>
            <person name="Carninci P."/>
            <person name="Chao Q."/>
            <person name="Choy N."/>
            <person name="Enju A."/>
            <person name="Goldsmith A.D."/>
            <person name="Gurjal M."/>
            <person name="Hansen N.F."/>
            <person name="Hayashizaki Y."/>
            <person name="Johnson-Hopson C."/>
            <person name="Hsuan V.W."/>
            <person name="Iida K."/>
            <person name="Karnes M."/>
            <person name="Khan S."/>
            <person name="Koesema E."/>
            <person name="Ishida J."/>
            <person name="Jiang P.X."/>
            <person name="Jones T."/>
            <person name="Kawai J."/>
            <person name="Kamiya A."/>
            <person name="Meyers C."/>
            <person name="Nakajima M."/>
            <person name="Narusaka M."/>
            <person name="Seki M."/>
            <person name="Sakurai T."/>
            <person name="Satou M."/>
            <person name="Tamse R."/>
            <person name="Vaysberg M."/>
            <person name="Wallender E.K."/>
            <person name="Wong C."/>
            <person name="Yamamura Y."/>
            <person name="Yuan S."/>
            <person name="Shinozaki K."/>
            <person name="Davis R.W."/>
            <person name="Theologis A."/>
            <person name="Ecker J.R."/>
        </authorList>
    </citation>
    <scope>NUCLEOTIDE SEQUENCE [LARGE SCALE MRNA]</scope>
    <source>
        <strain>cv. Columbia</strain>
    </source>
</reference>
<reference key="5">
    <citation type="submission" date="2002-03" db="EMBL/GenBank/DDBJ databases">
        <title>Full-length cDNA from Arabidopsis thaliana.</title>
        <authorList>
            <person name="Brover V.V."/>
            <person name="Troukhan M.E."/>
            <person name="Alexandrov N.A."/>
            <person name="Lu Y.-P."/>
            <person name="Flavell R.B."/>
            <person name="Feldmann K.A."/>
        </authorList>
    </citation>
    <scope>NUCLEOTIDE SEQUENCE [LARGE SCALE MRNA]</scope>
</reference>
<reference key="6">
    <citation type="journal article" date="2004" name="Carbohydr. Res.">
        <title>Pectin methylesterases: sequence-structural features and phylogenetic relationships.</title>
        <authorList>
            <person name="Markovic O."/>
            <person name="Janecek S."/>
        </authorList>
    </citation>
    <scope>GENE FAMILY</scope>
    <scope>NOMENCLATURE</scope>
</reference>
<reference key="7">
    <citation type="journal article" date="2006" name="Planta">
        <title>Comprehensive expression profiling of the pectin methylesterase gene family during silique development in Arabidopsis thaliana.</title>
        <authorList>
            <person name="Louvet R."/>
            <person name="Cavel E."/>
            <person name="Gutierrez L."/>
            <person name="Guenin S."/>
            <person name="Roger D."/>
            <person name="Gillet F."/>
            <person name="Guerineau F."/>
            <person name="Pelloux J."/>
        </authorList>
    </citation>
    <scope>TISSUE SPECIFICITY</scope>
    <scope>DEVELOPMENTAL STAGE</scope>
</reference>
<protein>
    <recommendedName>
        <fullName>Probable pectinesterase 67</fullName>
        <shortName>PE 67</shortName>
        <ecNumber>3.1.1.11</ecNumber>
    </recommendedName>
    <alternativeName>
        <fullName>Pectin methylesterase 67</fullName>
        <shortName>AtPME67</shortName>
    </alternativeName>
</protein>
<gene>
    <name type="primary">PME67</name>
    <name type="synonym">ARATH67</name>
    <name type="ordered locus">At3g17060</name>
    <name type="ORF">K14A17.13</name>
    <name type="ORF">K14A17_18</name>
</gene>
<comment type="function">
    <text evidence="1">Acts in the modification of cell walls via demethylesterification of cell wall pectin.</text>
</comment>
<comment type="catalytic activity">
    <reaction>
        <text>[(1-&gt;4)-alpha-D-galacturonosyl methyl ester](n) + n H2O = [(1-&gt;4)-alpha-D-galacturonosyl](n) + n methanol + n H(+)</text>
        <dbReference type="Rhea" id="RHEA:22380"/>
        <dbReference type="Rhea" id="RHEA-COMP:14570"/>
        <dbReference type="Rhea" id="RHEA-COMP:14573"/>
        <dbReference type="ChEBI" id="CHEBI:15377"/>
        <dbReference type="ChEBI" id="CHEBI:15378"/>
        <dbReference type="ChEBI" id="CHEBI:17790"/>
        <dbReference type="ChEBI" id="CHEBI:140522"/>
        <dbReference type="ChEBI" id="CHEBI:140523"/>
        <dbReference type="EC" id="3.1.1.11"/>
    </reaction>
</comment>
<comment type="pathway">
    <text>Glycan metabolism; pectin degradation; 2-dehydro-3-deoxy-D-gluconate from pectin: step 1/5.</text>
</comment>
<comment type="subcellular location">
    <subcellularLocation>
        <location evidence="1">Secreted</location>
        <location evidence="1">Cell wall</location>
    </subcellularLocation>
</comment>
<comment type="tissue specificity">
    <text evidence="4">Expressed in flower buds.</text>
</comment>
<comment type="similarity">
    <text evidence="5">Belongs to the pectinesterase family.</text>
</comment>